<evidence type="ECO:0000255" key="1">
    <source>
        <dbReference type="HAMAP-Rule" id="MF_01346"/>
    </source>
</evidence>
<evidence type="ECO:0000256" key="2">
    <source>
        <dbReference type="SAM" id="MobiDB-lite"/>
    </source>
</evidence>
<name>ATPA_MYCSJ</name>
<reference key="1">
    <citation type="submission" date="2007-02" db="EMBL/GenBank/DDBJ databases">
        <title>Complete sequence of Mycobacterium sp. JLS.</title>
        <authorList>
            <consortium name="US DOE Joint Genome Institute"/>
            <person name="Copeland A."/>
            <person name="Lucas S."/>
            <person name="Lapidus A."/>
            <person name="Barry K."/>
            <person name="Detter J.C."/>
            <person name="Glavina del Rio T."/>
            <person name="Hammon N."/>
            <person name="Israni S."/>
            <person name="Dalin E."/>
            <person name="Tice H."/>
            <person name="Pitluck S."/>
            <person name="Chain P."/>
            <person name="Malfatti S."/>
            <person name="Shin M."/>
            <person name="Vergez L."/>
            <person name="Schmutz J."/>
            <person name="Larimer F."/>
            <person name="Land M."/>
            <person name="Hauser L."/>
            <person name="Kyrpides N."/>
            <person name="Mikhailova N."/>
            <person name="Miller C.D."/>
            <person name="Anderson A.J."/>
            <person name="Sims R.C."/>
            <person name="Richardson P."/>
        </authorList>
    </citation>
    <scope>NUCLEOTIDE SEQUENCE [LARGE SCALE GENOMIC DNA]</scope>
    <source>
        <strain>JLS</strain>
    </source>
</reference>
<feature type="chain" id="PRO_0000302670" description="ATP synthase subunit alpha">
    <location>
        <begin position="1"/>
        <end position="548"/>
    </location>
</feature>
<feature type="region of interest" description="Disordered" evidence="2">
    <location>
        <begin position="511"/>
        <end position="548"/>
    </location>
</feature>
<feature type="compositionally biased region" description="Acidic residues" evidence="2">
    <location>
        <begin position="523"/>
        <end position="534"/>
    </location>
</feature>
<feature type="binding site" evidence="1">
    <location>
        <begin position="172"/>
        <end position="179"/>
    </location>
    <ligand>
        <name>ATP</name>
        <dbReference type="ChEBI" id="CHEBI:30616"/>
    </ligand>
</feature>
<feature type="site" description="Required for activity" evidence="1">
    <location>
        <position position="373"/>
    </location>
</feature>
<comment type="function">
    <text evidence="1">Produces ATP from ADP in the presence of a proton gradient across the membrane. The alpha chain is a regulatory subunit.</text>
</comment>
<comment type="catalytic activity">
    <reaction evidence="1">
        <text>ATP + H2O + 4 H(+)(in) = ADP + phosphate + 5 H(+)(out)</text>
        <dbReference type="Rhea" id="RHEA:57720"/>
        <dbReference type="ChEBI" id="CHEBI:15377"/>
        <dbReference type="ChEBI" id="CHEBI:15378"/>
        <dbReference type="ChEBI" id="CHEBI:30616"/>
        <dbReference type="ChEBI" id="CHEBI:43474"/>
        <dbReference type="ChEBI" id="CHEBI:456216"/>
        <dbReference type="EC" id="7.1.2.2"/>
    </reaction>
</comment>
<comment type="subunit">
    <text evidence="1">F-type ATPases have 2 components, CF(1) - the catalytic core - and CF(0) - the membrane proton channel. CF(1) has five subunits: alpha(3), beta(3), gamma(1), delta(1), epsilon(1). CF(0) has three main subunits: a(1), b(2) and c(9-12). The alpha and beta chains form an alternating ring which encloses part of the gamma chain. CF(1) is attached to CF(0) by a central stalk formed by the gamma and epsilon chains, while a peripheral stalk is formed by the delta and b chains.</text>
</comment>
<comment type="subcellular location">
    <subcellularLocation>
        <location evidence="1">Cell membrane</location>
        <topology evidence="1">Peripheral membrane protein</topology>
    </subcellularLocation>
</comment>
<comment type="similarity">
    <text evidence="1">Belongs to the ATPase alpha/beta chains family.</text>
</comment>
<organism>
    <name type="scientific">Mycobacterium sp. (strain JLS)</name>
    <dbReference type="NCBI Taxonomy" id="164757"/>
    <lineage>
        <taxon>Bacteria</taxon>
        <taxon>Bacillati</taxon>
        <taxon>Actinomycetota</taxon>
        <taxon>Actinomycetes</taxon>
        <taxon>Mycobacteriales</taxon>
        <taxon>Mycobacteriaceae</taxon>
        <taxon>Mycobacterium</taxon>
    </lineage>
</organism>
<dbReference type="EC" id="7.1.2.2" evidence="1"/>
<dbReference type="EMBL" id="CP000580">
    <property type="protein sequence ID" value="ABN99640.1"/>
    <property type="molecule type" value="Genomic_DNA"/>
</dbReference>
<dbReference type="SMR" id="A3Q3B3"/>
<dbReference type="KEGG" id="mjl:Mjls_3864"/>
<dbReference type="HOGENOM" id="CLU_010091_2_1_11"/>
<dbReference type="BioCyc" id="MSP164757:G1G8C-3904-MONOMER"/>
<dbReference type="GO" id="GO:0005886">
    <property type="term" value="C:plasma membrane"/>
    <property type="evidence" value="ECO:0007669"/>
    <property type="project" value="UniProtKB-SubCell"/>
</dbReference>
<dbReference type="GO" id="GO:0045259">
    <property type="term" value="C:proton-transporting ATP synthase complex"/>
    <property type="evidence" value="ECO:0007669"/>
    <property type="project" value="UniProtKB-KW"/>
</dbReference>
<dbReference type="GO" id="GO:0043531">
    <property type="term" value="F:ADP binding"/>
    <property type="evidence" value="ECO:0007669"/>
    <property type="project" value="TreeGrafter"/>
</dbReference>
<dbReference type="GO" id="GO:0005524">
    <property type="term" value="F:ATP binding"/>
    <property type="evidence" value="ECO:0007669"/>
    <property type="project" value="UniProtKB-UniRule"/>
</dbReference>
<dbReference type="GO" id="GO:0046933">
    <property type="term" value="F:proton-transporting ATP synthase activity, rotational mechanism"/>
    <property type="evidence" value="ECO:0007669"/>
    <property type="project" value="UniProtKB-UniRule"/>
</dbReference>
<dbReference type="CDD" id="cd18113">
    <property type="entry name" value="ATP-synt_F1_alpha_C"/>
    <property type="match status" value="1"/>
</dbReference>
<dbReference type="CDD" id="cd18116">
    <property type="entry name" value="ATP-synt_F1_alpha_N"/>
    <property type="match status" value="1"/>
</dbReference>
<dbReference type="CDD" id="cd01132">
    <property type="entry name" value="F1-ATPase_alpha_CD"/>
    <property type="match status" value="1"/>
</dbReference>
<dbReference type="FunFam" id="1.20.150.20:FF:000001">
    <property type="entry name" value="ATP synthase subunit alpha"/>
    <property type="match status" value="1"/>
</dbReference>
<dbReference type="FunFam" id="2.40.30.20:FF:000001">
    <property type="entry name" value="ATP synthase subunit alpha"/>
    <property type="match status" value="1"/>
</dbReference>
<dbReference type="FunFam" id="3.40.50.300:FF:000002">
    <property type="entry name" value="ATP synthase subunit alpha"/>
    <property type="match status" value="1"/>
</dbReference>
<dbReference type="Gene3D" id="2.40.30.20">
    <property type="match status" value="1"/>
</dbReference>
<dbReference type="Gene3D" id="1.20.150.20">
    <property type="entry name" value="ATP synthase alpha/beta chain, C-terminal domain"/>
    <property type="match status" value="1"/>
</dbReference>
<dbReference type="Gene3D" id="3.40.50.300">
    <property type="entry name" value="P-loop containing nucleotide triphosphate hydrolases"/>
    <property type="match status" value="1"/>
</dbReference>
<dbReference type="HAMAP" id="MF_01346">
    <property type="entry name" value="ATP_synth_alpha_bact"/>
    <property type="match status" value="1"/>
</dbReference>
<dbReference type="InterPro" id="IPR023366">
    <property type="entry name" value="ATP_synth_asu-like_sf"/>
</dbReference>
<dbReference type="InterPro" id="IPR000793">
    <property type="entry name" value="ATP_synth_asu_C"/>
</dbReference>
<dbReference type="InterPro" id="IPR038376">
    <property type="entry name" value="ATP_synth_asu_C_sf"/>
</dbReference>
<dbReference type="InterPro" id="IPR033732">
    <property type="entry name" value="ATP_synth_F1_a_nt-bd_dom"/>
</dbReference>
<dbReference type="InterPro" id="IPR005294">
    <property type="entry name" value="ATP_synth_F1_asu"/>
</dbReference>
<dbReference type="InterPro" id="IPR020003">
    <property type="entry name" value="ATPase_a/bsu_AS"/>
</dbReference>
<dbReference type="InterPro" id="IPR004100">
    <property type="entry name" value="ATPase_F1/V1/A1_a/bsu_N"/>
</dbReference>
<dbReference type="InterPro" id="IPR036121">
    <property type="entry name" value="ATPase_F1/V1/A1_a/bsu_N_sf"/>
</dbReference>
<dbReference type="InterPro" id="IPR000194">
    <property type="entry name" value="ATPase_F1/V1/A1_a/bsu_nucl-bd"/>
</dbReference>
<dbReference type="InterPro" id="IPR027417">
    <property type="entry name" value="P-loop_NTPase"/>
</dbReference>
<dbReference type="NCBIfam" id="TIGR00962">
    <property type="entry name" value="atpA"/>
    <property type="match status" value="1"/>
</dbReference>
<dbReference type="NCBIfam" id="NF009884">
    <property type="entry name" value="PRK13343.1"/>
    <property type="match status" value="1"/>
</dbReference>
<dbReference type="PANTHER" id="PTHR48082">
    <property type="entry name" value="ATP SYNTHASE SUBUNIT ALPHA, MITOCHONDRIAL"/>
    <property type="match status" value="1"/>
</dbReference>
<dbReference type="PANTHER" id="PTHR48082:SF2">
    <property type="entry name" value="ATP SYNTHASE SUBUNIT ALPHA, MITOCHONDRIAL"/>
    <property type="match status" value="1"/>
</dbReference>
<dbReference type="Pfam" id="PF00006">
    <property type="entry name" value="ATP-synt_ab"/>
    <property type="match status" value="1"/>
</dbReference>
<dbReference type="Pfam" id="PF00306">
    <property type="entry name" value="ATP-synt_ab_C"/>
    <property type="match status" value="1"/>
</dbReference>
<dbReference type="Pfam" id="PF02874">
    <property type="entry name" value="ATP-synt_ab_N"/>
    <property type="match status" value="1"/>
</dbReference>
<dbReference type="SUPFAM" id="SSF47917">
    <property type="entry name" value="C-terminal domain of alpha and beta subunits of F1 ATP synthase"/>
    <property type="match status" value="1"/>
</dbReference>
<dbReference type="SUPFAM" id="SSF50615">
    <property type="entry name" value="N-terminal domain of alpha and beta subunits of F1 ATP synthase"/>
    <property type="match status" value="1"/>
</dbReference>
<dbReference type="SUPFAM" id="SSF52540">
    <property type="entry name" value="P-loop containing nucleoside triphosphate hydrolases"/>
    <property type="match status" value="1"/>
</dbReference>
<dbReference type="PROSITE" id="PS00152">
    <property type="entry name" value="ATPASE_ALPHA_BETA"/>
    <property type="match status" value="1"/>
</dbReference>
<protein>
    <recommendedName>
        <fullName evidence="1">ATP synthase subunit alpha</fullName>
        <ecNumber evidence="1">7.1.2.2</ecNumber>
    </recommendedName>
    <alternativeName>
        <fullName evidence="1">ATP synthase F1 sector subunit alpha</fullName>
    </alternativeName>
    <alternativeName>
        <fullName evidence="1">F-ATPase subunit alpha</fullName>
    </alternativeName>
</protein>
<proteinExistence type="inferred from homology"/>
<keyword id="KW-0066">ATP synthesis</keyword>
<keyword id="KW-0067">ATP-binding</keyword>
<keyword id="KW-1003">Cell membrane</keyword>
<keyword id="KW-0139">CF(1)</keyword>
<keyword id="KW-0375">Hydrogen ion transport</keyword>
<keyword id="KW-0406">Ion transport</keyword>
<keyword id="KW-0472">Membrane</keyword>
<keyword id="KW-0547">Nucleotide-binding</keyword>
<keyword id="KW-1278">Translocase</keyword>
<keyword id="KW-0813">Transport</keyword>
<sequence>MAELTISAADIQGAIEDYVANFATDTEREEIGTVIDAGDGIAHVEGLPSVMTQELLEFPGGVLGVALNLDEHSIGAVILGDFEKIEEGQQVKRTGEVLSVPVGDGYLGRVVNPLGQPIDGRGEIETTDRRALELQAPSVVQRQGVSEPLQTGIKAIDSQTPIGRGQRQLIIGDRKTGKTAVCVDTILNQRQNWETGDPNQQVRCVYVAIGQKGTTIASVRRTLEEGGAMDYTTIVAAPASDSAGFKWLAPYTGSAIAQHWMYDGKHVLIVFDDLTKHAEAYRAISLLLRRPPGREAFPGDVFYLHSRLLERCAKLSDELGGGSMTGLPLIETKANDISAYIPTNVISITDGQCFLETDLFNQGVRPAINVGVSVSRVGGAAQIKAMKEVAGSLRLDLSQYRELESFAAFASDLDATSKAQLDRGARLVELLKQPQNSPMPVEEQVVAIFLGTRGHLDTVPVEDVQRFEQELLEHVRSSKEEIFTEIRESKKLSDELEKTLTDVVNEFKKGFETTSGESVVPDENVEAMSEDDVEKESVKVRKPAPKKK</sequence>
<gene>
    <name evidence="1" type="primary">atpA</name>
    <name type="ordered locus">Mjls_3864</name>
</gene>
<accession>A3Q3B3</accession>